<name>IF1_MYCCT</name>
<feature type="chain" id="PRO_0000338868" description="Translation initiation factor IF-1">
    <location>
        <begin position="1"/>
        <end position="74"/>
    </location>
</feature>
<feature type="domain" description="S1-like" evidence="1">
    <location>
        <begin position="1"/>
        <end position="72"/>
    </location>
</feature>
<dbReference type="EMBL" id="CP000123">
    <property type="protein sequence ID" value="ABC01089.1"/>
    <property type="molecule type" value="Genomic_DNA"/>
</dbReference>
<dbReference type="RefSeq" id="WP_011167188.1">
    <property type="nucleotide sequence ID" value="NC_007633.1"/>
</dbReference>
<dbReference type="SMR" id="Q2SRH5"/>
<dbReference type="GeneID" id="93426154"/>
<dbReference type="KEGG" id="mcp:MCAP_0674"/>
<dbReference type="HOGENOM" id="CLU_151267_1_0_14"/>
<dbReference type="PhylomeDB" id="Q2SRH5"/>
<dbReference type="Proteomes" id="UP000001928">
    <property type="component" value="Chromosome"/>
</dbReference>
<dbReference type="GO" id="GO:0005829">
    <property type="term" value="C:cytosol"/>
    <property type="evidence" value="ECO:0007669"/>
    <property type="project" value="TreeGrafter"/>
</dbReference>
<dbReference type="GO" id="GO:0043022">
    <property type="term" value="F:ribosome binding"/>
    <property type="evidence" value="ECO:0007669"/>
    <property type="project" value="UniProtKB-UniRule"/>
</dbReference>
<dbReference type="GO" id="GO:0019843">
    <property type="term" value="F:rRNA binding"/>
    <property type="evidence" value="ECO:0007669"/>
    <property type="project" value="UniProtKB-UniRule"/>
</dbReference>
<dbReference type="GO" id="GO:0003743">
    <property type="term" value="F:translation initiation factor activity"/>
    <property type="evidence" value="ECO:0007669"/>
    <property type="project" value="UniProtKB-UniRule"/>
</dbReference>
<dbReference type="CDD" id="cd04451">
    <property type="entry name" value="S1_IF1"/>
    <property type="match status" value="1"/>
</dbReference>
<dbReference type="FunFam" id="2.40.50.140:FF:000002">
    <property type="entry name" value="Translation initiation factor IF-1"/>
    <property type="match status" value="1"/>
</dbReference>
<dbReference type="Gene3D" id="2.40.50.140">
    <property type="entry name" value="Nucleic acid-binding proteins"/>
    <property type="match status" value="1"/>
</dbReference>
<dbReference type="HAMAP" id="MF_00075">
    <property type="entry name" value="IF_1"/>
    <property type="match status" value="1"/>
</dbReference>
<dbReference type="InterPro" id="IPR012340">
    <property type="entry name" value="NA-bd_OB-fold"/>
</dbReference>
<dbReference type="InterPro" id="IPR006196">
    <property type="entry name" value="RNA-binding_domain_S1_IF1"/>
</dbReference>
<dbReference type="InterPro" id="IPR003029">
    <property type="entry name" value="S1_domain"/>
</dbReference>
<dbReference type="InterPro" id="IPR004368">
    <property type="entry name" value="TIF_IF1"/>
</dbReference>
<dbReference type="NCBIfam" id="TIGR00008">
    <property type="entry name" value="infA"/>
    <property type="match status" value="1"/>
</dbReference>
<dbReference type="PANTHER" id="PTHR33370">
    <property type="entry name" value="TRANSLATION INITIATION FACTOR IF-1, CHLOROPLASTIC"/>
    <property type="match status" value="1"/>
</dbReference>
<dbReference type="PANTHER" id="PTHR33370:SF1">
    <property type="entry name" value="TRANSLATION INITIATION FACTOR IF-1, CHLOROPLASTIC"/>
    <property type="match status" value="1"/>
</dbReference>
<dbReference type="Pfam" id="PF01176">
    <property type="entry name" value="eIF-1a"/>
    <property type="match status" value="1"/>
</dbReference>
<dbReference type="SMART" id="SM00316">
    <property type="entry name" value="S1"/>
    <property type="match status" value="1"/>
</dbReference>
<dbReference type="SUPFAM" id="SSF50249">
    <property type="entry name" value="Nucleic acid-binding proteins"/>
    <property type="match status" value="1"/>
</dbReference>
<dbReference type="PROSITE" id="PS50832">
    <property type="entry name" value="S1_IF1_TYPE"/>
    <property type="match status" value="1"/>
</dbReference>
<comment type="function">
    <text evidence="1">One of the essential components for the initiation of protein synthesis. Stabilizes the binding of IF-2 and IF-3 on the 30S subunit to which N-formylmethionyl-tRNA(fMet) subsequently binds. Helps modulate mRNA selection, yielding the 30S pre-initiation complex (PIC). Upon addition of the 50S ribosomal subunit IF-1, IF-2 and IF-3 are released leaving the mature 70S translation initiation complex.</text>
</comment>
<comment type="subunit">
    <text evidence="1">Component of the 30S ribosomal translation pre-initiation complex which assembles on the 30S ribosome in the order IF-2 and IF-3, IF-1 and N-formylmethionyl-tRNA(fMet); mRNA recruitment can occur at any time during PIC assembly.</text>
</comment>
<comment type="subcellular location">
    <subcellularLocation>
        <location evidence="1">Cytoplasm</location>
    </subcellularLocation>
</comment>
<comment type="similarity">
    <text evidence="1">Belongs to the IF-1 family.</text>
</comment>
<reference key="1">
    <citation type="submission" date="2005-09" db="EMBL/GenBank/DDBJ databases">
        <authorList>
            <person name="Glass J.I."/>
            <person name="Lartigue C."/>
            <person name="Pfannkoch C."/>
            <person name="Baden-Tillson H."/>
            <person name="Smith H.O."/>
            <person name="Venter J.C."/>
            <person name="Roske K."/>
            <person name="Wise K.S."/>
            <person name="Calcutt M.J."/>
            <person name="Nelson W.C."/>
            <person name="Nierman W.C."/>
        </authorList>
    </citation>
    <scope>NUCLEOTIDE SEQUENCE [LARGE SCALE GENOMIC DNA]</scope>
    <source>
        <strain>California kid / ATCC 27343 / NCTC 10154</strain>
    </source>
</reference>
<sequence>MAKETEMEFEGTVVEVLPNAQFKVKLENGVVINAHVSGKIRMHYIRILPGDKVTIVISPYDMTRGRITYRKIGK</sequence>
<accession>Q2SRH5</accession>
<proteinExistence type="inferred from homology"/>
<keyword id="KW-0963">Cytoplasm</keyword>
<keyword id="KW-0396">Initiation factor</keyword>
<keyword id="KW-0648">Protein biosynthesis</keyword>
<keyword id="KW-0694">RNA-binding</keyword>
<keyword id="KW-0699">rRNA-binding</keyword>
<evidence type="ECO:0000255" key="1">
    <source>
        <dbReference type="HAMAP-Rule" id="MF_00075"/>
    </source>
</evidence>
<gene>
    <name evidence="1" type="primary">infA</name>
    <name type="ordered locus">MCAP_0674</name>
</gene>
<protein>
    <recommendedName>
        <fullName evidence="1">Translation initiation factor IF-1</fullName>
    </recommendedName>
</protein>
<organism>
    <name type="scientific">Mycoplasma capricolum subsp. capricolum (strain California kid / ATCC 27343 / NCTC 10154)</name>
    <dbReference type="NCBI Taxonomy" id="340047"/>
    <lineage>
        <taxon>Bacteria</taxon>
        <taxon>Bacillati</taxon>
        <taxon>Mycoplasmatota</taxon>
        <taxon>Mollicutes</taxon>
        <taxon>Mycoplasmataceae</taxon>
        <taxon>Mycoplasma</taxon>
    </lineage>
</organism>